<gene>
    <name type="primary">MOD5</name>
    <name type="ordered locus">YOR274W</name>
</gene>
<name>MOD5_YEAST</name>
<organism>
    <name type="scientific">Saccharomyces cerevisiae (strain ATCC 204508 / S288c)</name>
    <name type="common">Baker's yeast</name>
    <dbReference type="NCBI Taxonomy" id="559292"/>
    <lineage>
        <taxon>Eukaryota</taxon>
        <taxon>Fungi</taxon>
        <taxon>Dikarya</taxon>
        <taxon>Ascomycota</taxon>
        <taxon>Saccharomycotina</taxon>
        <taxon>Saccharomycetes</taxon>
        <taxon>Saccharomycetales</taxon>
        <taxon>Saccharomycetaceae</taxon>
        <taxon>Saccharomyces</taxon>
    </lineage>
</organism>
<keyword id="KW-0002">3D-structure</keyword>
<keyword id="KW-0024">Alternative initiation</keyword>
<keyword id="KW-0034">Amyloid</keyword>
<keyword id="KW-0067">ATP-binding</keyword>
<keyword id="KW-0963">Cytoplasm</keyword>
<keyword id="KW-0479">Metal-binding</keyword>
<keyword id="KW-0496">Mitochondrion</keyword>
<keyword id="KW-0547">Nucleotide-binding</keyword>
<keyword id="KW-0539">Nucleus</keyword>
<keyword id="KW-0640">Prion</keyword>
<keyword id="KW-1185">Reference proteome</keyword>
<keyword id="KW-0808">Transferase</keyword>
<keyword id="KW-0819">tRNA processing</keyword>
<keyword id="KW-0862">Zinc</keyword>
<keyword id="KW-0863">Zinc-finger</keyword>
<comment type="function">
    <text evidence="2 7 9">Catalyzes the transfer of a dimethylallyl group onto the adenine at position 37 in the anticodon loop on a specific subset of tRNAs both in the cytosol and the mitochondrion, leading to the formation of N6-(dimethylallyl)adenosine (i(6)A). This modification optimizes the codon:anticodon fit in the ribosome and promotes translational fidelity. Competes with the farnesyl pyrophosphate synthase ERG20 for the common substrate dimethylallyl diphosphate (DMAPP).</text>
</comment>
<comment type="catalytic activity">
    <reaction evidence="5 9">
        <text>adenosine(37) in tRNA + dimethylallyl diphosphate = N(6)-dimethylallyladenosine(37) in tRNA + diphosphate</text>
        <dbReference type="Rhea" id="RHEA:26482"/>
        <dbReference type="Rhea" id="RHEA-COMP:10162"/>
        <dbReference type="Rhea" id="RHEA-COMP:10375"/>
        <dbReference type="ChEBI" id="CHEBI:33019"/>
        <dbReference type="ChEBI" id="CHEBI:57623"/>
        <dbReference type="ChEBI" id="CHEBI:74411"/>
        <dbReference type="ChEBI" id="CHEBI:74415"/>
        <dbReference type="EC" id="2.5.1.75"/>
    </reaction>
    <physiologicalReaction direction="left-to-right" evidence="5 9">
        <dbReference type="Rhea" id="RHEA:26483"/>
    </physiologicalReaction>
</comment>
<comment type="subcellular location">
    <text evidence="8">[MOD+] forms multicytoplasmic aggregates that do not colocalize to either mitochondria or nucleus.</text>
</comment>
<comment type="subcellular location">
    <molecule>Isoform I</molecule>
    <subcellularLocation>
        <location evidence="4 10">Cytoplasm</location>
    </subcellularLocation>
    <subcellularLocation>
        <location evidence="4 6 10">Mitochondrion</location>
    </subcellularLocation>
</comment>
<comment type="subcellular location">
    <molecule>Isoform II</molecule>
    <subcellularLocation>
        <location evidence="4 6 10">Cytoplasm</location>
    </subcellularLocation>
    <subcellularLocation>
        <location evidence="10">Nucleus</location>
    </subcellularLocation>
</comment>
<comment type="alternative products">
    <event type="alternative initiation"/>
    <isoform>
        <id>P07884-1</id>
        <name>I</name>
        <name evidence="11">IPPT-I</name>
        <sequence type="displayed"/>
    </isoform>
    <isoform>
        <id>P07884-2</id>
        <name>II</name>
        <name evidence="11">IPPT-II</name>
        <sequence type="described" ref="VSP_018811"/>
    </isoform>
</comment>
<comment type="domain">
    <text evidence="13">The core aggregation region, although lacking the prion-typical Gln/Asn (Q/N)-rich domain, is required for the formation of the amyloid-like fibrillar aggregates.</text>
</comment>
<comment type="miscellaneous">
    <text evidence="13">[MOD+] is the prion form of MOD5. [MOD+] is the result of a conformational change of the cellular MOD5 protein that becomes self-propagating and infectious. This conformational change generates a form of MOD5 that assembles into amyloid-like fibrillar aggregates. [MOD+]-aggregates sequester soluble MOD5, resulting in decreased levels of (i(6)A)-modified tRNAs and higher ergosterol levels, due to less competition for ERG20, which uses the same substrate DMAPP than MOD5. [MOD+] can be cured by GdnHCl and by deletion of the molecular chaperone HSP104, which is required for [MOD+] propagation. The [MOD+] state acquires resistance against antifungal agents such as flucanozole, ketoconazole and clotrimazole that inhibit ergosterol biosynthesis. De novo appearance of [MOD+] is favored in the presence of antifungal agents, and the growth advantage of [MOD+] is lost when the cells are released from the selective pressure. Thus, the conformational switch of MOD5 from a soluble state to a prion state allows the cell to adapt to the harmful environment of anti-fungal drugs by up-regulating ergosterol biosynthesis at the expense of tRNA modification.</text>
</comment>
<comment type="miscellaneous">
    <text evidence="3">Present with 2020 molecules/cell in log phase SD medium.</text>
</comment>
<comment type="similarity">
    <text evidence="12">Belongs to the IPP transferase family.</text>
</comment>
<sequence>MLKGPLKGCLNMSKKVIVIAGTTGVGKSQLSIQLAQKFNGEVINSDSMQVYKDIPIITNKHPLQEREGIPHHVMNHVDWSEEYYSHRFETECMNAIEDIHRRGKIPIVVGGTHYYLQTLFNKRVDTKSSERKLTRKQLDILESTDPDVIYNTLVKCDPDIATKYHPNDYRRVQRMLEIYYKTGKKPSETFNEQKITLKFDTLFLWLYSKPEPLFQRLDDRVDDMLERGALQEIKQLYEYYSQNKFTPEQCENGVWQVIGFKEFLPWLTGKTDDNTVKLEDCIERMKTRTRQYAKRQVKWIKKMLIPDIKGDIYLLDATDLSQWDTNASQRAIAISNDFISNRPIKQERAPKALEELLSKGETTMKKLDDWTHYTCNVCRNADGKNVVAIGEKYWKIHLGSRRHKSNLKRNTRQADFEKWKINKKETVE</sequence>
<accession>P07884</accession>
<accession>D6W2X4</accession>
<accession>Q12203</accession>
<evidence type="ECO:0000255" key="1"/>
<evidence type="ECO:0000269" key="2">
    <source>
    </source>
</evidence>
<evidence type="ECO:0000269" key="3">
    <source>
    </source>
</evidence>
<evidence type="ECO:0000269" key="4">
    <source>
    </source>
</evidence>
<evidence type="ECO:0000269" key="5">
    <source>
    </source>
</evidence>
<evidence type="ECO:0000269" key="6">
    <source>
    </source>
</evidence>
<evidence type="ECO:0000269" key="7">
    <source>
    </source>
</evidence>
<evidence type="ECO:0000269" key="8">
    <source>
    </source>
</evidence>
<evidence type="ECO:0000269" key="9">
    <source>
    </source>
</evidence>
<evidence type="ECO:0000269" key="10">
    <source>
    </source>
</evidence>
<evidence type="ECO:0000303" key="11">
    <source>
    </source>
</evidence>
<evidence type="ECO:0000305" key="12"/>
<evidence type="ECO:0000305" key="13">
    <source>
    </source>
</evidence>
<evidence type="ECO:0007744" key="14">
    <source>
        <dbReference type="PDB" id="3EPH"/>
    </source>
</evidence>
<evidence type="ECO:0007744" key="15">
    <source>
        <dbReference type="PDB" id="3EPJ"/>
    </source>
</evidence>
<evidence type="ECO:0007744" key="16">
    <source>
        <dbReference type="PDB" id="3EPK"/>
    </source>
</evidence>
<evidence type="ECO:0007744" key="17">
    <source>
        <dbReference type="PDB" id="3EPL"/>
    </source>
</evidence>
<evidence type="ECO:0007829" key="18">
    <source>
        <dbReference type="PDB" id="3EPH"/>
    </source>
</evidence>
<feature type="chain" id="PRO_0000019025" description="tRNA dimethylallyltransferase">
    <location>
        <begin position="1"/>
        <end position="428"/>
    </location>
</feature>
<feature type="zinc finger region" description="Matrin-type">
    <location>
        <begin position="373"/>
        <end position="409"/>
    </location>
</feature>
<feature type="region of interest" description="Interaction with substrate tRNA" evidence="5">
    <location>
        <begin position="46"/>
        <end position="49"/>
    </location>
</feature>
<feature type="region of interest" description="Interaction with substrate tRNA" evidence="5">
    <location>
        <begin position="170"/>
        <end position="174"/>
    </location>
</feature>
<feature type="region of interest" description="Core aggregation region" evidence="5">
    <location>
        <begin position="199"/>
        <end position="207"/>
    </location>
</feature>
<feature type="region of interest" description="Interaction with isopentenylpyrophosphate transferase" evidence="5">
    <location>
        <begin position="210"/>
        <end position="232"/>
    </location>
</feature>
<feature type="region of interest" description="Interaction with substrate tRNA" evidence="5">
    <location>
        <begin position="256"/>
        <end position="258"/>
    </location>
</feature>
<feature type="region of interest" description="Interaction with substrate tRNA" evidence="5">
    <location>
        <begin position="284"/>
        <end position="302"/>
    </location>
</feature>
<feature type="binding site" evidence="1">
    <location>
        <begin position="21"/>
        <end position="28"/>
    </location>
    <ligand>
        <name>ATP</name>
        <dbReference type="ChEBI" id="CHEBI:30616"/>
    </ligand>
</feature>
<feature type="binding site" evidence="5">
    <location>
        <begin position="23"/>
        <end position="28"/>
    </location>
    <ligand>
        <name>dimethylallyl diphosphate</name>
        <dbReference type="ChEBI" id="CHEBI:57623"/>
    </ligand>
</feature>
<feature type="binding site" evidence="5 14 15 16 17">
    <location>
        <position position="375"/>
    </location>
    <ligand>
        <name>Zn(2+)</name>
        <dbReference type="ChEBI" id="CHEBI:29105"/>
    </ligand>
</feature>
<feature type="binding site" evidence="5 14 15 16 17">
    <location>
        <position position="378"/>
    </location>
    <ligand>
        <name>Zn(2+)</name>
        <dbReference type="ChEBI" id="CHEBI:29105"/>
    </ligand>
</feature>
<feature type="binding site" evidence="5 14 15 16 17">
    <location>
        <position position="397"/>
    </location>
    <ligand>
        <name>Zn(2+)</name>
        <dbReference type="ChEBI" id="CHEBI:29105"/>
    </ligand>
</feature>
<feature type="binding site" evidence="5 14 15 16 17">
    <location>
        <position position="403"/>
    </location>
    <ligand>
        <name>Zn(2+)</name>
        <dbReference type="ChEBI" id="CHEBI:29105"/>
    </ligand>
</feature>
<feature type="site" description="Interaction with substrate tRNA" evidence="5">
    <location>
        <position position="112"/>
    </location>
</feature>
<feature type="site" description="Interaction with substrate tRNA" evidence="5">
    <location>
        <position position="193"/>
    </location>
</feature>
<feature type="splice variant" id="VSP_018811" description="In isoform II." evidence="12">
    <location>
        <begin position="1"/>
        <end position="11"/>
    </location>
</feature>
<feature type="sequence conflict" description="In Ref. 1; AAA34785." evidence="12" ref="1">
    <location>
        <position position="313"/>
    </location>
</feature>
<feature type="sequence conflict" description="In Ref. 1; AAA34785." evidence="12" ref="1">
    <original>C</original>
    <variation>R</variation>
    <location>
        <position position="375"/>
    </location>
</feature>
<feature type="strand" evidence="18">
    <location>
        <begin position="15"/>
        <end position="21"/>
    </location>
</feature>
<feature type="strand" evidence="18">
    <location>
        <begin position="23"/>
        <end position="26"/>
    </location>
</feature>
<feature type="helix" evidence="18">
    <location>
        <begin position="27"/>
        <end position="38"/>
    </location>
</feature>
<feature type="strand" evidence="18">
    <location>
        <begin position="40"/>
        <end position="44"/>
    </location>
</feature>
<feature type="turn" evidence="18">
    <location>
        <begin position="47"/>
        <end position="50"/>
    </location>
</feature>
<feature type="strand" evidence="18">
    <location>
        <begin position="51"/>
        <end position="53"/>
    </location>
</feature>
<feature type="turn" evidence="18">
    <location>
        <begin position="55"/>
        <end position="59"/>
    </location>
</feature>
<feature type="helix" evidence="18">
    <location>
        <begin position="63"/>
        <end position="65"/>
    </location>
</feature>
<feature type="turn" evidence="18">
    <location>
        <begin position="66"/>
        <end position="68"/>
    </location>
</feature>
<feature type="strand" evidence="18">
    <location>
        <begin position="71"/>
        <end position="73"/>
    </location>
</feature>
<feature type="helix" evidence="18">
    <location>
        <begin position="85"/>
        <end position="100"/>
    </location>
</feature>
<feature type="turn" evidence="18">
    <location>
        <begin position="101"/>
        <end position="103"/>
    </location>
</feature>
<feature type="strand" evidence="18">
    <location>
        <begin position="105"/>
        <end position="109"/>
    </location>
</feature>
<feature type="helix" evidence="18">
    <location>
        <begin position="113"/>
        <end position="120"/>
    </location>
</feature>
<feature type="strand" evidence="18">
    <location>
        <begin position="127"/>
        <end position="129"/>
    </location>
</feature>
<feature type="helix" evidence="18">
    <location>
        <begin position="135"/>
        <end position="141"/>
    </location>
</feature>
<feature type="strand" evidence="18">
    <location>
        <begin position="144"/>
        <end position="148"/>
    </location>
</feature>
<feature type="helix" evidence="18">
    <location>
        <begin position="149"/>
        <end position="155"/>
    </location>
</feature>
<feature type="helix" evidence="18">
    <location>
        <begin position="158"/>
        <end position="161"/>
    </location>
</feature>
<feature type="helix" evidence="18">
    <location>
        <begin position="169"/>
        <end position="182"/>
    </location>
</feature>
<feature type="helix" evidence="18">
    <location>
        <begin position="186"/>
        <end position="191"/>
    </location>
</feature>
<feature type="strand" evidence="18">
    <location>
        <begin position="198"/>
        <end position="207"/>
    </location>
</feature>
<feature type="helix" evidence="18">
    <location>
        <begin position="210"/>
        <end position="226"/>
    </location>
</feature>
<feature type="helix" evidence="18">
    <location>
        <begin position="229"/>
        <end position="240"/>
    </location>
</feature>
<feature type="turn" evidence="18">
    <location>
        <begin position="241"/>
        <end position="244"/>
    </location>
</feature>
<feature type="helix" evidence="18">
    <location>
        <begin position="247"/>
        <end position="249"/>
    </location>
</feature>
<feature type="helix" evidence="18">
    <location>
        <begin position="253"/>
        <end position="256"/>
    </location>
</feature>
<feature type="helix" evidence="18">
    <location>
        <begin position="261"/>
        <end position="267"/>
    </location>
</feature>
<feature type="helix" evidence="18">
    <location>
        <begin position="278"/>
        <end position="302"/>
    </location>
</feature>
<feature type="helix" evidence="18">
    <location>
        <begin position="304"/>
        <end position="307"/>
    </location>
</feature>
<feature type="turn" evidence="18">
    <location>
        <begin position="308"/>
        <end position="310"/>
    </location>
</feature>
<feature type="strand" evidence="18">
    <location>
        <begin position="312"/>
        <end position="316"/>
    </location>
</feature>
<feature type="turn" evidence="18">
    <location>
        <begin position="320"/>
        <end position="322"/>
    </location>
</feature>
<feature type="turn" evidence="18">
    <location>
        <begin position="324"/>
        <end position="327"/>
    </location>
</feature>
<feature type="helix" evidence="18">
    <location>
        <begin position="328"/>
        <end position="339"/>
    </location>
</feature>
<feature type="helix" evidence="18">
    <location>
        <begin position="351"/>
        <end position="357"/>
    </location>
</feature>
<feature type="helix" evidence="18">
    <location>
        <begin position="359"/>
        <end position="361"/>
    </location>
</feature>
<feature type="helix" evidence="18">
    <location>
        <begin position="363"/>
        <end position="365"/>
    </location>
</feature>
<feature type="strand" evidence="18">
    <location>
        <begin position="372"/>
        <end position="379"/>
    </location>
</feature>
<feature type="strand" evidence="18">
    <location>
        <begin position="385"/>
        <end position="390"/>
    </location>
</feature>
<feature type="helix" evidence="18">
    <location>
        <begin position="391"/>
        <end position="398"/>
    </location>
</feature>
<feature type="helix" evidence="18">
    <location>
        <begin position="401"/>
        <end position="418"/>
    </location>
</feature>
<protein>
    <recommendedName>
        <fullName>tRNA dimethylallyltransferase</fullName>
        <shortName>DMATase</shortName>
        <ecNumber evidence="5 9">2.5.1.75</ecNumber>
    </recommendedName>
    <alternativeName>
        <fullName>Isopentenyl-diphosphate: tRNA isopentenyltransferase</fullName>
        <shortName>IPP transferase</shortName>
        <shortName>IPPT</shortName>
    </alternativeName>
    <alternativeName>
        <fullName>tRNA isopentenyltransferase</fullName>
        <shortName>IPTase</shortName>
    </alternativeName>
</protein>
<dbReference type="EC" id="2.5.1.75" evidence="5 9"/>
<dbReference type="EMBL" id="M15991">
    <property type="protein sequence ID" value="AAA34785.1"/>
    <property type="molecule type" value="Genomic_DNA"/>
</dbReference>
<dbReference type="EMBL" id="X89633">
    <property type="protein sequence ID" value="CAA61780.1"/>
    <property type="molecule type" value="Genomic_DNA"/>
</dbReference>
<dbReference type="EMBL" id="Z75182">
    <property type="protein sequence ID" value="CAA99499.1"/>
    <property type="molecule type" value="Genomic_DNA"/>
</dbReference>
<dbReference type="EMBL" id="BK006948">
    <property type="protein sequence ID" value="DAA11040.1"/>
    <property type="molecule type" value="Genomic_DNA"/>
</dbReference>
<dbReference type="PIR" id="S67176">
    <property type="entry name" value="S67176"/>
</dbReference>
<dbReference type="RefSeq" id="NP_014917.3">
    <molecule id="P07884-1"/>
    <property type="nucleotide sequence ID" value="NM_001183693.3"/>
</dbReference>
<dbReference type="PDB" id="3EPH">
    <property type="method" value="X-ray"/>
    <property type="resolution" value="2.95 A"/>
    <property type="chains" value="A/B=13-421"/>
</dbReference>
<dbReference type="PDB" id="3EPJ">
    <property type="method" value="X-ray"/>
    <property type="resolution" value="3.10 A"/>
    <property type="chains" value="A/B=13-421"/>
</dbReference>
<dbReference type="PDB" id="3EPK">
    <property type="method" value="X-ray"/>
    <property type="resolution" value="3.20 A"/>
    <property type="chains" value="A/B=13-421"/>
</dbReference>
<dbReference type="PDB" id="3EPL">
    <property type="method" value="X-ray"/>
    <property type="resolution" value="3.60 A"/>
    <property type="chains" value="A/B=13-421"/>
</dbReference>
<dbReference type="PDBsum" id="3EPH"/>
<dbReference type="PDBsum" id="3EPJ"/>
<dbReference type="PDBsum" id="3EPK"/>
<dbReference type="PDBsum" id="3EPL"/>
<dbReference type="SMR" id="P07884"/>
<dbReference type="BioGRID" id="34663">
    <property type="interactions" value="108"/>
</dbReference>
<dbReference type="DIP" id="DIP-4094N"/>
<dbReference type="FunCoup" id="P07884">
    <property type="interactions" value="1152"/>
</dbReference>
<dbReference type="IntAct" id="P07884">
    <property type="interactions" value="3"/>
</dbReference>
<dbReference type="STRING" id="4932.YOR274W"/>
<dbReference type="PaxDb" id="4932-YOR274W"/>
<dbReference type="PeptideAtlas" id="P07884"/>
<dbReference type="EnsemblFungi" id="YOR274W_mRNA">
    <molecule id="P07884-1"/>
    <property type="protein sequence ID" value="YOR274W"/>
    <property type="gene ID" value="YOR274W"/>
</dbReference>
<dbReference type="GeneID" id="854448"/>
<dbReference type="KEGG" id="sce:YOR274W"/>
<dbReference type="AGR" id="SGD:S000005800"/>
<dbReference type="SGD" id="S000005800">
    <property type="gene designation" value="MOD5"/>
</dbReference>
<dbReference type="VEuPathDB" id="FungiDB:YOR274W"/>
<dbReference type="eggNOG" id="KOG1384">
    <property type="taxonomic scope" value="Eukaryota"/>
</dbReference>
<dbReference type="GeneTree" id="ENSGT00390000015214"/>
<dbReference type="HOGENOM" id="CLU_032616_2_3_1"/>
<dbReference type="InParanoid" id="P07884"/>
<dbReference type="OMA" id="VPHYLID"/>
<dbReference type="OrthoDB" id="775260at2759"/>
<dbReference type="BioCyc" id="YEAST:YOR274W-MONOMER"/>
<dbReference type="BRENDA" id="2.5.1.75">
    <property type="organism ID" value="984"/>
</dbReference>
<dbReference type="BioGRID-ORCS" id="854448">
    <property type="hits" value="0 hits in 10 CRISPR screens"/>
</dbReference>
<dbReference type="EvolutionaryTrace" id="P07884"/>
<dbReference type="PRO" id="PR:P07884"/>
<dbReference type="Proteomes" id="UP000002311">
    <property type="component" value="Chromosome XV"/>
</dbReference>
<dbReference type="RNAct" id="P07884">
    <property type="molecule type" value="protein"/>
</dbReference>
<dbReference type="GO" id="GO:0005829">
    <property type="term" value="C:cytosol"/>
    <property type="evidence" value="ECO:0000314"/>
    <property type="project" value="SGD"/>
</dbReference>
<dbReference type="GO" id="GO:0005739">
    <property type="term" value="C:mitochondrion"/>
    <property type="evidence" value="ECO:0000314"/>
    <property type="project" value="SGD"/>
</dbReference>
<dbReference type="GO" id="GO:0005730">
    <property type="term" value="C:nucleolus"/>
    <property type="evidence" value="ECO:0000314"/>
    <property type="project" value="SGD"/>
</dbReference>
<dbReference type="GO" id="GO:0005634">
    <property type="term" value="C:nucleus"/>
    <property type="evidence" value="ECO:0000314"/>
    <property type="project" value="SGD"/>
</dbReference>
<dbReference type="GO" id="GO:0005524">
    <property type="term" value="F:ATP binding"/>
    <property type="evidence" value="ECO:0007669"/>
    <property type="project" value="UniProtKB-KW"/>
</dbReference>
<dbReference type="GO" id="GO:0000049">
    <property type="term" value="F:tRNA binding"/>
    <property type="evidence" value="ECO:0000314"/>
    <property type="project" value="SGD"/>
</dbReference>
<dbReference type="GO" id="GO:0052381">
    <property type="term" value="F:tRNA dimethylallyltransferase activity"/>
    <property type="evidence" value="ECO:0000314"/>
    <property type="project" value="SGD"/>
</dbReference>
<dbReference type="GO" id="GO:0008270">
    <property type="term" value="F:zinc ion binding"/>
    <property type="evidence" value="ECO:0007669"/>
    <property type="project" value="UniProtKB-KW"/>
</dbReference>
<dbReference type="GO" id="GO:0006400">
    <property type="term" value="P:tRNA modification"/>
    <property type="evidence" value="ECO:0000314"/>
    <property type="project" value="SGD"/>
</dbReference>
<dbReference type="FunFam" id="1.10.20.140:FF:000009">
    <property type="entry name" value="tRNA dimethylallyltransferase"/>
    <property type="match status" value="1"/>
</dbReference>
<dbReference type="Gene3D" id="1.10.20.140">
    <property type="match status" value="1"/>
</dbReference>
<dbReference type="Gene3D" id="3.30.160.60">
    <property type="entry name" value="Classic Zinc Finger"/>
    <property type="match status" value="1"/>
</dbReference>
<dbReference type="Gene3D" id="3.40.50.300">
    <property type="entry name" value="P-loop containing nucleotide triphosphate hydrolases"/>
    <property type="match status" value="1"/>
</dbReference>
<dbReference type="HAMAP" id="MF_00185">
    <property type="entry name" value="IPP_trans"/>
    <property type="match status" value="1"/>
</dbReference>
<dbReference type="InterPro" id="IPR039657">
    <property type="entry name" value="Dimethylallyltransferase"/>
</dbReference>
<dbReference type="InterPro" id="IPR030666">
    <property type="entry name" value="IPP_transferase_euk"/>
</dbReference>
<dbReference type="InterPro" id="IPR018022">
    <property type="entry name" value="IPT"/>
</dbReference>
<dbReference type="InterPro" id="IPR027417">
    <property type="entry name" value="P-loop_NTPase"/>
</dbReference>
<dbReference type="NCBIfam" id="TIGR00174">
    <property type="entry name" value="miaA"/>
    <property type="match status" value="1"/>
</dbReference>
<dbReference type="PANTHER" id="PTHR11088">
    <property type="entry name" value="TRNA DIMETHYLALLYLTRANSFERASE"/>
    <property type="match status" value="1"/>
</dbReference>
<dbReference type="PANTHER" id="PTHR11088:SF89">
    <property type="entry name" value="TRNA DIMETHYLALLYLTRANSFERASE"/>
    <property type="match status" value="1"/>
</dbReference>
<dbReference type="Pfam" id="PF01715">
    <property type="entry name" value="IPPT"/>
    <property type="match status" value="1"/>
</dbReference>
<dbReference type="PIRSF" id="PIRSF039110">
    <property type="entry name" value="IPP_transferase"/>
    <property type="match status" value="1"/>
</dbReference>
<dbReference type="SUPFAM" id="SSF52540">
    <property type="entry name" value="P-loop containing nucleoside triphosphate hydrolases"/>
    <property type="match status" value="1"/>
</dbReference>
<reference key="1">
    <citation type="journal article" date="1987" name="Mol. Cell. Biol.">
        <title>DNA sequence and transcript mapping of MOD5: features of the 5' region which suggest two translational starts.</title>
        <authorList>
            <person name="Najarian D."/>
            <person name="Dihanich M.E."/>
            <person name="Martin N.C."/>
            <person name="Hopper A.K."/>
        </authorList>
    </citation>
    <scope>NUCLEOTIDE SEQUENCE [GENOMIC DNA]</scope>
</reference>
<reference key="2">
    <citation type="journal article" date="1996" name="Yeast">
        <title>DNA sequence analysis of the VPH1-SNF2 region on chromosome XV of Saccharomyces cerevisiae.</title>
        <authorList>
            <person name="Cheret G."/>
            <person name="Bernardi A."/>
            <person name="Sor F.J."/>
        </authorList>
    </citation>
    <scope>NUCLEOTIDE SEQUENCE [GENOMIC DNA]</scope>
    <source>
        <strain>ATCC 204508 / S288c</strain>
    </source>
</reference>
<reference key="3">
    <citation type="journal article" date="1997" name="Nature">
        <title>The nucleotide sequence of Saccharomyces cerevisiae chromosome XV.</title>
        <authorList>
            <person name="Dujon B."/>
            <person name="Albermann K."/>
            <person name="Aldea M."/>
            <person name="Alexandraki D."/>
            <person name="Ansorge W."/>
            <person name="Arino J."/>
            <person name="Benes V."/>
            <person name="Bohn C."/>
            <person name="Bolotin-Fukuhara M."/>
            <person name="Bordonne R."/>
            <person name="Boyer J."/>
            <person name="Camasses A."/>
            <person name="Casamayor A."/>
            <person name="Casas C."/>
            <person name="Cheret G."/>
            <person name="Cziepluch C."/>
            <person name="Daignan-Fornier B."/>
            <person name="Dang V.-D."/>
            <person name="de Haan M."/>
            <person name="Delius H."/>
            <person name="Durand P."/>
            <person name="Fairhead C."/>
            <person name="Feldmann H."/>
            <person name="Gaillon L."/>
            <person name="Galisson F."/>
            <person name="Gamo F.-J."/>
            <person name="Gancedo C."/>
            <person name="Goffeau A."/>
            <person name="Goulding S.E."/>
            <person name="Grivell L.A."/>
            <person name="Habbig B."/>
            <person name="Hand N.J."/>
            <person name="Hani J."/>
            <person name="Hattenhorst U."/>
            <person name="Hebling U."/>
            <person name="Hernando Y."/>
            <person name="Herrero E."/>
            <person name="Heumann K."/>
            <person name="Hiesel R."/>
            <person name="Hilger F."/>
            <person name="Hofmann B."/>
            <person name="Hollenberg C.P."/>
            <person name="Hughes B."/>
            <person name="Jauniaux J.-C."/>
            <person name="Kalogeropoulos A."/>
            <person name="Katsoulou C."/>
            <person name="Kordes E."/>
            <person name="Lafuente M.J."/>
            <person name="Landt O."/>
            <person name="Louis E.J."/>
            <person name="Maarse A.C."/>
            <person name="Madania A."/>
            <person name="Mannhaupt G."/>
            <person name="Marck C."/>
            <person name="Martin R.P."/>
            <person name="Mewes H.-W."/>
            <person name="Michaux G."/>
            <person name="Paces V."/>
            <person name="Parle-McDermott A.G."/>
            <person name="Pearson B.M."/>
            <person name="Perrin A."/>
            <person name="Pettersson B."/>
            <person name="Poch O."/>
            <person name="Pohl T.M."/>
            <person name="Poirey R."/>
            <person name="Portetelle D."/>
            <person name="Pujol A."/>
            <person name="Purnelle B."/>
            <person name="Ramezani Rad M."/>
            <person name="Rechmann S."/>
            <person name="Schwager C."/>
            <person name="Schweizer M."/>
            <person name="Sor F."/>
            <person name="Sterky F."/>
            <person name="Tarassov I.A."/>
            <person name="Teodoru C."/>
            <person name="Tettelin H."/>
            <person name="Thierry A."/>
            <person name="Tobiasch E."/>
            <person name="Tzermia M."/>
            <person name="Uhlen M."/>
            <person name="Unseld M."/>
            <person name="Valens M."/>
            <person name="Vandenbol M."/>
            <person name="Vetter I."/>
            <person name="Vlcek C."/>
            <person name="Voet M."/>
            <person name="Volckaert G."/>
            <person name="Voss H."/>
            <person name="Wambutt R."/>
            <person name="Wedler H."/>
            <person name="Wiemann S."/>
            <person name="Winsor B."/>
            <person name="Wolfe K.H."/>
            <person name="Zollner A."/>
            <person name="Zumstein E."/>
            <person name="Kleine K."/>
        </authorList>
    </citation>
    <scope>NUCLEOTIDE SEQUENCE [LARGE SCALE GENOMIC DNA]</scope>
    <source>
        <strain>ATCC 204508 / S288c</strain>
    </source>
</reference>
<reference key="4">
    <citation type="journal article" date="2014" name="G3 (Bethesda)">
        <title>The reference genome sequence of Saccharomyces cerevisiae: Then and now.</title>
        <authorList>
            <person name="Engel S.R."/>
            <person name="Dietrich F.S."/>
            <person name="Fisk D.G."/>
            <person name="Binkley G."/>
            <person name="Balakrishnan R."/>
            <person name="Costanzo M.C."/>
            <person name="Dwight S.S."/>
            <person name="Hitz B.C."/>
            <person name="Karra K."/>
            <person name="Nash R.S."/>
            <person name="Weng S."/>
            <person name="Wong E.D."/>
            <person name="Lloyd P."/>
            <person name="Skrzypek M.S."/>
            <person name="Miyasato S.R."/>
            <person name="Simison M."/>
            <person name="Cherry J.M."/>
        </authorList>
    </citation>
    <scope>GENOME REANNOTATION</scope>
    <source>
        <strain>ATCC 204508 / S288c</strain>
    </source>
</reference>
<reference key="5">
    <citation type="journal article" date="1987" name="Mol. Cell. Biol.">
        <title>Isolation and characterization of MOD5, a gene required for isopentenylation of cytoplasmic and mitochondrial tRNAs of Saccharomyces cerevisiae.</title>
        <authorList>
            <person name="Dihanich M.E."/>
            <person name="Najarian D."/>
            <person name="Clark R."/>
            <person name="Gillman E.C."/>
            <person name="Martin N.C."/>
            <person name="Hopper A.K."/>
        </authorList>
    </citation>
    <scope>FUNCTION</scope>
    <scope>CATALYTIC ACTIVITY</scope>
</reference>
<reference key="6">
    <citation type="journal article" date="1991" name="Proc. Natl. Acad. Sci. U.S.A.">
        <title>mRNA leader length and initiation codon context determine alternative AUG selection for the yeast gene MOD5.</title>
        <authorList>
            <person name="Slusher L.B."/>
            <person name="Gillman E.C."/>
            <person name="Martin N.C."/>
            <person name="Hopper A.K."/>
        </authorList>
    </citation>
    <scope>ALTERNATIVE INITIATION</scope>
    <scope>SUBCELLULAR LOCATION</scope>
</reference>
<reference key="7">
    <citation type="journal article" date="1991" name="Mol. Cell. Biol.">
        <title>MOD5 translation initiation sites determine N6-isopentenyladenosine modification of mitochondrial and cytoplasmic tRNA.</title>
        <authorList>
            <person name="Gillman E.C."/>
            <person name="Slusher L.B."/>
            <person name="Martin N.C."/>
            <person name="Hopper A.K."/>
        </authorList>
    </citation>
    <scope>ALTERNATIVE INITIATION</scope>
    <scope>SUBCELLULAR LOCATION</scope>
</reference>
<reference key="8">
    <citation type="journal article" date="1994" name="Mol. Cell. Biol.">
        <title>Subcellular locations of MOD5 proteins: mapping of sequences sufficient for targeting to mitochondria and demonstration that mitochondrial and nuclear isoforms commingle in the cytosol.</title>
        <authorList>
            <person name="Boguta M."/>
            <person name="Hunter L.A."/>
            <person name="Shen W.C."/>
            <person name="Gillman E.C."/>
            <person name="Martin N.C."/>
            <person name="Hopper A.K."/>
        </authorList>
    </citation>
    <scope>ALTERNATIVE INITIATION</scope>
    <scope>SUBCELLULAR LOCATION</scope>
</reference>
<reference key="9">
    <citation type="journal article" date="2000" name="Proc. Natl. Acad. Sci. U.S.A.">
        <title>Competition between a sterol biosynthetic enzyme and tRNA modification in addition to changes in the protein synthesis machinery causes altered nonsense suppression.</title>
        <authorList>
            <person name="Benko A.L."/>
            <person name="Vaduva G."/>
            <person name="Martin N.C."/>
            <person name="Hopper A.K."/>
        </authorList>
    </citation>
    <scope>FUNCTION</scope>
</reference>
<reference key="10">
    <citation type="journal article" date="2003" name="Nature">
        <title>Global analysis of protein expression in yeast.</title>
        <authorList>
            <person name="Ghaemmaghami S."/>
            <person name="Huh W.-K."/>
            <person name="Bower K."/>
            <person name="Howson R.W."/>
            <person name="Belle A."/>
            <person name="Dephoure N."/>
            <person name="O'Shea E.K."/>
            <person name="Weissman J.S."/>
        </authorList>
    </citation>
    <scope>LEVEL OF PROTEIN EXPRESSION [LARGE SCALE ANALYSIS]</scope>
</reference>
<reference key="11">
    <citation type="journal article" date="2011" name="RNA">
        <title>Plasticity and diversity of tRNA anticodon determinants of substrate recognition by eukaryotic A37 isopentenyltransferases.</title>
        <authorList>
            <person name="Lamichhane T.N."/>
            <person name="Blewett N.H."/>
            <person name="Maraia R.J."/>
        </authorList>
    </citation>
    <scope>FUNCTION</scope>
</reference>
<reference key="12">
    <citation type="journal article" date="2012" name="Science">
        <title>A yeast prion, Mod5, promotes acquired drug resistance and cell survival under environmental stress.</title>
        <authorList>
            <person name="Suzuki G."/>
            <person name="Shimazu N."/>
            <person name="Tanaka M."/>
        </authorList>
    </citation>
    <scope>PRION FORMATION</scope>
    <scope>SUBCELLULAR LOCATION</scope>
    <scope>DOMAIN</scope>
</reference>
<reference key="13">
    <citation type="journal article" date="2008" name="Proc. Natl. Acad. Sci. U.S.A.">
        <title>Crystallographic snapshots of eukaryotic dimethylallyltransferase acting on tRNA: insight into tRNA recognition and reaction mechanism.</title>
        <authorList>
            <person name="Zhou C."/>
            <person name="Huang R.H."/>
        </authorList>
    </citation>
    <scope>X-RAY CRYSTALLOGRAPHY (2.95 ANGSTROMS) OF 13-421 IN COMPLEXES WITH SUBSTRATE TRNA; ISOPENTENYL DIPHOSPHATE AND ZINC IONS</scope>
    <scope>CATALYTIC ACTIVITY</scope>
</reference>
<proteinExistence type="evidence at protein level"/>